<accession>Q1C7V3</accession>
<keyword id="KW-0050">Antiport</keyword>
<keyword id="KW-0997">Cell inner membrane</keyword>
<keyword id="KW-1003">Cell membrane</keyword>
<keyword id="KW-0406">Ion transport</keyword>
<keyword id="KW-0472">Membrane</keyword>
<keyword id="KW-0915">Sodium</keyword>
<keyword id="KW-0739">Sodium transport</keyword>
<keyword id="KW-0812">Transmembrane</keyword>
<keyword id="KW-1133">Transmembrane helix</keyword>
<keyword id="KW-0813">Transport</keyword>
<feature type="chain" id="PRO_0000333154" description="Na(+)/H(+) antiporter NhaB">
    <location>
        <begin position="1"/>
        <end position="524"/>
    </location>
</feature>
<feature type="transmembrane region" description="Helical" evidence="1">
    <location>
        <begin position="13"/>
        <end position="33"/>
    </location>
</feature>
<feature type="transmembrane region" description="Helical" evidence="1">
    <location>
        <begin position="98"/>
        <end position="118"/>
    </location>
</feature>
<feature type="transmembrane region" description="Helical" evidence="1">
    <location>
        <begin position="140"/>
        <end position="160"/>
    </location>
</feature>
<feature type="transmembrane region" description="Helical" evidence="1">
    <location>
        <begin position="239"/>
        <end position="259"/>
    </location>
</feature>
<feature type="transmembrane region" description="Helical" evidence="1">
    <location>
        <begin position="304"/>
        <end position="324"/>
    </location>
</feature>
<feature type="transmembrane region" description="Helical" evidence="1">
    <location>
        <begin position="325"/>
        <end position="345"/>
    </location>
</feature>
<feature type="transmembrane region" description="Helical" evidence="1">
    <location>
        <begin position="358"/>
        <end position="378"/>
    </location>
</feature>
<feature type="transmembrane region" description="Helical" evidence="1">
    <location>
        <begin position="448"/>
        <end position="468"/>
    </location>
</feature>
<feature type="transmembrane region" description="Helical" evidence="1">
    <location>
        <begin position="479"/>
        <end position="499"/>
    </location>
</feature>
<dbReference type="EMBL" id="CP000308">
    <property type="protein sequence ID" value="ABG13469.1"/>
    <property type="molecule type" value="Genomic_DNA"/>
</dbReference>
<dbReference type="RefSeq" id="WP_002211689.1">
    <property type="nucleotide sequence ID" value="NZ_CP009906.1"/>
</dbReference>
<dbReference type="SMR" id="Q1C7V3"/>
<dbReference type="GeneID" id="57976523"/>
<dbReference type="KEGG" id="ypa:YPA_1502"/>
<dbReference type="Proteomes" id="UP000001971">
    <property type="component" value="Chromosome"/>
</dbReference>
<dbReference type="GO" id="GO:0005886">
    <property type="term" value="C:plasma membrane"/>
    <property type="evidence" value="ECO:0007669"/>
    <property type="project" value="UniProtKB-SubCell"/>
</dbReference>
<dbReference type="GO" id="GO:0015385">
    <property type="term" value="F:sodium:proton antiporter activity"/>
    <property type="evidence" value="ECO:0007669"/>
    <property type="project" value="InterPro"/>
</dbReference>
<dbReference type="HAMAP" id="MF_01599">
    <property type="entry name" value="NhaB"/>
    <property type="match status" value="1"/>
</dbReference>
<dbReference type="InterPro" id="IPR004671">
    <property type="entry name" value="Na+/H+_antiporter_NhaB"/>
</dbReference>
<dbReference type="NCBIfam" id="TIGR00774">
    <property type="entry name" value="NhaB"/>
    <property type="match status" value="1"/>
</dbReference>
<dbReference type="NCBIfam" id="NF007093">
    <property type="entry name" value="PRK09547.1"/>
    <property type="match status" value="1"/>
</dbReference>
<dbReference type="PANTHER" id="PTHR43302:SF1">
    <property type="entry name" value="NA(+)_H(+) ANTIPORTER NHAB"/>
    <property type="match status" value="1"/>
</dbReference>
<dbReference type="PANTHER" id="PTHR43302">
    <property type="entry name" value="TRANSPORTER ARSB-RELATED"/>
    <property type="match status" value="1"/>
</dbReference>
<dbReference type="Pfam" id="PF06450">
    <property type="entry name" value="NhaB"/>
    <property type="match status" value="1"/>
</dbReference>
<organism>
    <name type="scientific">Yersinia pestis bv. Antiqua (strain Antiqua)</name>
    <dbReference type="NCBI Taxonomy" id="360102"/>
    <lineage>
        <taxon>Bacteria</taxon>
        <taxon>Pseudomonadati</taxon>
        <taxon>Pseudomonadota</taxon>
        <taxon>Gammaproteobacteria</taxon>
        <taxon>Enterobacterales</taxon>
        <taxon>Yersiniaceae</taxon>
        <taxon>Yersinia</taxon>
    </lineage>
</organism>
<protein>
    <recommendedName>
        <fullName evidence="1">Na(+)/H(+) antiporter NhaB</fullName>
    </recommendedName>
    <alternativeName>
        <fullName evidence="1">Sodium/proton antiporter NhaB</fullName>
    </alternativeName>
</protein>
<name>NHAB_YERPA</name>
<reference key="1">
    <citation type="journal article" date="2006" name="J. Bacteriol.">
        <title>Complete genome sequence of Yersinia pestis strains Antiqua and Nepal516: evidence of gene reduction in an emerging pathogen.</title>
        <authorList>
            <person name="Chain P.S.G."/>
            <person name="Hu P."/>
            <person name="Malfatti S.A."/>
            <person name="Radnedge L."/>
            <person name="Larimer F."/>
            <person name="Vergez L.M."/>
            <person name="Worsham P."/>
            <person name="Chu M.C."/>
            <person name="Andersen G.L."/>
        </authorList>
    </citation>
    <scope>NUCLEOTIDE SEQUENCE [LARGE SCALE GENOMIC DNA]</scope>
    <source>
        <strain>Antiqua</strain>
    </source>
</reference>
<proteinExistence type="inferred from homology"/>
<comment type="function">
    <text evidence="1">Na(+)/H(+) antiporter that extrudes sodium in exchange for external protons.</text>
</comment>
<comment type="catalytic activity">
    <reaction evidence="1">
        <text>2 Na(+)(in) + 3 H(+)(out) = 2 Na(+)(out) + 3 H(+)(in)</text>
        <dbReference type="Rhea" id="RHEA:29247"/>
        <dbReference type="ChEBI" id="CHEBI:15378"/>
        <dbReference type="ChEBI" id="CHEBI:29101"/>
    </reaction>
    <physiologicalReaction direction="left-to-right" evidence="1">
        <dbReference type="Rhea" id="RHEA:29248"/>
    </physiologicalReaction>
</comment>
<comment type="subcellular location">
    <subcellularLocation>
        <location evidence="1">Cell inner membrane</location>
        <topology evidence="1">Multi-pass membrane protein</topology>
    </subcellularLocation>
</comment>
<comment type="similarity">
    <text evidence="1">Belongs to the NhaB Na(+)/H(+) (TC 2.A.34) antiporter family.</text>
</comment>
<sequence>MDITNRQAVLKNFLGNSPDWYKLAIMGFLIINPLVFFFVSPFVAGWMLVIEFIFTLAMALKCYPLQPGGLLAIQAVAIGMTSPHQVAEEIANNLEVLLLLVFMVAGIYFMKQLLLFVFTKLLLNIRSKTILSLAFCLASAFLSAFLDALTVIAVVISVSVGFYTIYHNVTSNHSDKDITDDSGIDNQDSHETLEQFRAFLRSLMMHAGVGTALGGVMTMVGEPQNLIIAKSAGWNFADFFIRMLPVTLPVFIFGLLVCLLVEKFKLFGYGAQLPERVRQVLTEYDQQANAKRTKQEKMKLIVQAIIGVWLVLALALHLAEVGLVGLSVIILATSFCGITNEHSLGKAFQEALPFTALLTVFFAVVAVIIEQSLFTPIIQFVLQASPSAQLSLFYLFNGLLSSVSDNVFVGTVYINEARSAFEHGIVSLQQFELLAVAINTGTNLPSVATPNGQAAFLFLLTSALAPLIRLSYGRMVYMALPYTLVMTIVGLLGVEFLLVPMTEWLTQAGWISLPHITNGVAIPH</sequence>
<evidence type="ECO:0000255" key="1">
    <source>
        <dbReference type="HAMAP-Rule" id="MF_01599"/>
    </source>
</evidence>
<gene>
    <name evidence="1" type="primary">nhaB</name>
    <name type="ordered locus">YPA_1502</name>
</gene>